<protein>
    <recommendedName>
        <fullName>DCC family protein At1g52590, chloroplastic</fullName>
    </recommendedName>
</protein>
<feature type="transit peptide" description="Chloroplast" evidence="1">
    <location>
        <begin position="1"/>
        <end position="25"/>
    </location>
</feature>
<feature type="chain" id="PRO_0000286542" description="DCC family protein At1g52590, chloroplastic">
    <location>
        <begin position="26"/>
        <end position="172"/>
    </location>
</feature>
<feature type="sequence conflict" description="In Ref. 5; AAM65780." evidence="2" ref="5">
    <original>AQ</original>
    <variation>EK</variation>
    <location>
        <begin position="18"/>
        <end position="19"/>
    </location>
</feature>
<feature type="sequence conflict" description="In Ref. 5; AAM65780." evidence="2" ref="5">
    <original>V</original>
    <variation>F</variation>
    <location>
        <position position="24"/>
    </location>
</feature>
<accession>Q9SSR1</accession>
<accession>Q8L9T1</accession>
<organism>
    <name type="scientific">Arabidopsis thaliana</name>
    <name type="common">Mouse-ear cress</name>
    <dbReference type="NCBI Taxonomy" id="3702"/>
    <lineage>
        <taxon>Eukaryota</taxon>
        <taxon>Viridiplantae</taxon>
        <taxon>Streptophyta</taxon>
        <taxon>Embryophyta</taxon>
        <taxon>Tracheophyta</taxon>
        <taxon>Spermatophyta</taxon>
        <taxon>Magnoliopsida</taxon>
        <taxon>eudicotyledons</taxon>
        <taxon>Gunneridae</taxon>
        <taxon>Pentapetalae</taxon>
        <taxon>rosids</taxon>
        <taxon>malvids</taxon>
        <taxon>Brassicales</taxon>
        <taxon>Brassicaceae</taxon>
        <taxon>Camelineae</taxon>
        <taxon>Arabidopsis</taxon>
    </lineage>
</organism>
<dbReference type="EMBL" id="AC008016">
    <property type="protein sequence ID" value="AAD55605.1"/>
    <property type="molecule type" value="Genomic_DNA"/>
</dbReference>
<dbReference type="EMBL" id="CP002684">
    <property type="protein sequence ID" value="AEE32827.1"/>
    <property type="molecule type" value="Genomic_DNA"/>
</dbReference>
<dbReference type="EMBL" id="AK117491">
    <property type="protein sequence ID" value="BAC42154.1"/>
    <property type="molecule type" value="mRNA"/>
</dbReference>
<dbReference type="EMBL" id="BT005075">
    <property type="protein sequence ID" value="AAO50608.1"/>
    <property type="molecule type" value="mRNA"/>
</dbReference>
<dbReference type="EMBL" id="AY088239">
    <property type="protein sequence ID" value="AAM65780.1"/>
    <property type="molecule type" value="mRNA"/>
</dbReference>
<dbReference type="PIR" id="F96566">
    <property type="entry name" value="F96566"/>
</dbReference>
<dbReference type="RefSeq" id="NP_564611.1">
    <property type="nucleotide sequence ID" value="NM_104137.2"/>
</dbReference>
<dbReference type="SMR" id="Q9SSR1"/>
<dbReference type="FunCoup" id="Q9SSR1">
    <property type="interactions" value="199"/>
</dbReference>
<dbReference type="STRING" id="3702.Q9SSR1"/>
<dbReference type="iPTMnet" id="Q9SSR1"/>
<dbReference type="PaxDb" id="3702-AT1G52590.1"/>
<dbReference type="ProteomicsDB" id="242384"/>
<dbReference type="DNASU" id="841691"/>
<dbReference type="EnsemblPlants" id="AT1G52590.1">
    <property type="protein sequence ID" value="AT1G52590.1"/>
    <property type="gene ID" value="AT1G52590"/>
</dbReference>
<dbReference type="GeneID" id="841691"/>
<dbReference type="Gramene" id="AT1G52590.1">
    <property type="protein sequence ID" value="AT1G52590.1"/>
    <property type="gene ID" value="AT1G52590"/>
</dbReference>
<dbReference type="KEGG" id="ath:AT1G52590"/>
<dbReference type="Araport" id="AT1G52590"/>
<dbReference type="TAIR" id="AT1G52590"/>
<dbReference type="eggNOG" id="ENOG502S8IF">
    <property type="taxonomic scope" value="Eukaryota"/>
</dbReference>
<dbReference type="HOGENOM" id="CLU_092206_0_1_1"/>
<dbReference type="InParanoid" id="Q9SSR1"/>
<dbReference type="OMA" id="MAIAGQC"/>
<dbReference type="PhylomeDB" id="Q9SSR1"/>
<dbReference type="PRO" id="PR:Q9SSR1"/>
<dbReference type="Proteomes" id="UP000006548">
    <property type="component" value="Chromosome 1"/>
</dbReference>
<dbReference type="ExpressionAtlas" id="Q9SSR1">
    <property type="expression patterns" value="baseline and differential"/>
</dbReference>
<dbReference type="GO" id="GO:0010287">
    <property type="term" value="C:plastoglobule"/>
    <property type="evidence" value="ECO:0007005"/>
    <property type="project" value="TAIR"/>
</dbReference>
<dbReference type="GO" id="GO:0015035">
    <property type="term" value="F:protein-disulfide reductase activity"/>
    <property type="evidence" value="ECO:0007669"/>
    <property type="project" value="InterPro"/>
</dbReference>
<dbReference type="InterPro" id="IPR007263">
    <property type="entry name" value="DCC1-like"/>
</dbReference>
<dbReference type="InterPro" id="IPR052927">
    <property type="entry name" value="DCC_oxidoreductase"/>
</dbReference>
<dbReference type="PANTHER" id="PTHR33639:SF2">
    <property type="entry name" value="DUF393 DOMAIN-CONTAINING PROTEIN"/>
    <property type="match status" value="1"/>
</dbReference>
<dbReference type="PANTHER" id="PTHR33639">
    <property type="entry name" value="THIOL-DISULFIDE OXIDOREDUCTASE DCC"/>
    <property type="match status" value="1"/>
</dbReference>
<dbReference type="Pfam" id="PF04134">
    <property type="entry name" value="DCC1-like"/>
    <property type="match status" value="1"/>
</dbReference>
<name>Y1259_ARATH</name>
<keyword id="KW-0150">Chloroplast</keyword>
<keyword id="KW-0934">Plastid</keyword>
<keyword id="KW-1185">Reference proteome</keyword>
<keyword id="KW-0809">Transit peptide</keyword>
<proteinExistence type="evidence at transcript level"/>
<sequence>MAILIPASFGRLTITSRAQVRVRVSASANQRTIRRDSVDWVKETSSFFEEDKRPIMLFDGVCNLCNGGVKFVRDHDRNRSIRFEALQSEAGKKLLLRSGRAPDDISSVVLVENDRSYIKSEAVLKIMKYIDLPFPQLAFFLQFAPLFVRDFLYENVANNRYAMFGRSDSCEL</sequence>
<comment type="subcellular location">
    <subcellularLocation>
        <location evidence="1">Plastid</location>
        <location evidence="1">Chloroplast</location>
    </subcellularLocation>
</comment>
<comment type="similarity">
    <text evidence="2">Belongs to the DCC thiol-disulfide oxidoreductase family.</text>
</comment>
<reference key="1">
    <citation type="journal article" date="2000" name="Nature">
        <title>Sequence and analysis of chromosome 1 of the plant Arabidopsis thaliana.</title>
        <authorList>
            <person name="Theologis A."/>
            <person name="Ecker J.R."/>
            <person name="Palm C.J."/>
            <person name="Federspiel N.A."/>
            <person name="Kaul S."/>
            <person name="White O."/>
            <person name="Alonso J."/>
            <person name="Altafi H."/>
            <person name="Araujo R."/>
            <person name="Bowman C.L."/>
            <person name="Brooks S.Y."/>
            <person name="Buehler E."/>
            <person name="Chan A."/>
            <person name="Chao Q."/>
            <person name="Chen H."/>
            <person name="Cheuk R.F."/>
            <person name="Chin C.W."/>
            <person name="Chung M.K."/>
            <person name="Conn L."/>
            <person name="Conway A.B."/>
            <person name="Conway A.R."/>
            <person name="Creasy T.H."/>
            <person name="Dewar K."/>
            <person name="Dunn P."/>
            <person name="Etgu P."/>
            <person name="Feldblyum T.V."/>
            <person name="Feng J.-D."/>
            <person name="Fong B."/>
            <person name="Fujii C.Y."/>
            <person name="Gill J.E."/>
            <person name="Goldsmith A.D."/>
            <person name="Haas B."/>
            <person name="Hansen N.F."/>
            <person name="Hughes B."/>
            <person name="Huizar L."/>
            <person name="Hunter J.L."/>
            <person name="Jenkins J."/>
            <person name="Johnson-Hopson C."/>
            <person name="Khan S."/>
            <person name="Khaykin E."/>
            <person name="Kim C.J."/>
            <person name="Koo H.L."/>
            <person name="Kremenetskaia I."/>
            <person name="Kurtz D.B."/>
            <person name="Kwan A."/>
            <person name="Lam B."/>
            <person name="Langin-Hooper S."/>
            <person name="Lee A."/>
            <person name="Lee J.M."/>
            <person name="Lenz C.A."/>
            <person name="Li J.H."/>
            <person name="Li Y.-P."/>
            <person name="Lin X."/>
            <person name="Liu S.X."/>
            <person name="Liu Z.A."/>
            <person name="Luros J.S."/>
            <person name="Maiti R."/>
            <person name="Marziali A."/>
            <person name="Militscher J."/>
            <person name="Miranda M."/>
            <person name="Nguyen M."/>
            <person name="Nierman W.C."/>
            <person name="Osborne B.I."/>
            <person name="Pai G."/>
            <person name="Peterson J."/>
            <person name="Pham P.K."/>
            <person name="Rizzo M."/>
            <person name="Rooney T."/>
            <person name="Rowley D."/>
            <person name="Sakano H."/>
            <person name="Salzberg S.L."/>
            <person name="Schwartz J.R."/>
            <person name="Shinn P."/>
            <person name="Southwick A.M."/>
            <person name="Sun H."/>
            <person name="Tallon L.J."/>
            <person name="Tambunga G."/>
            <person name="Toriumi M.J."/>
            <person name="Town C.D."/>
            <person name="Utterback T."/>
            <person name="Van Aken S."/>
            <person name="Vaysberg M."/>
            <person name="Vysotskaia V.S."/>
            <person name="Walker M."/>
            <person name="Wu D."/>
            <person name="Yu G."/>
            <person name="Fraser C.M."/>
            <person name="Venter J.C."/>
            <person name="Davis R.W."/>
        </authorList>
    </citation>
    <scope>NUCLEOTIDE SEQUENCE [LARGE SCALE GENOMIC DNA]</scope>
    <source>
        <strain>cv. Columbia</strain>
    </source>
</reference>
<reference key="2">
    <citation type="journal article" date="2017" name="Plant J.">
        <title>Araport11: a complete reannotation of the Arabidopsis thaliana reference genome.</title>
        <authorList>
            <person name="Cheng C.Y."/>
            <person name="Krishnakumar V."/>
            <person name="Chan A.P."/>
            <person name="Thibaud-Nissen F."/>
            <person name="Schobel S."/>
            <person name="Town C.D."/>
        </authorList>
    </citation>
    <scope>GENOME REANNOTATION</scope>
    <source>
        <strain>cv. Columbia</strain>
    </source>
</reference>
<reference key="3">
    <citation type="journal article" date="2002" name="Science">
        <title>Functional annotation of a full-length Arabidopsis cDNA collection.</title>
        <authorList>
            <person name="Seki M."/>
            <person name="Narusaka M."/>
            <person name="Kamiya A."/>
            <person name="Ishida J."/>
            <person name="Satou M."/>
            <person name="Sakurai T."/>
            <person name="Nakajima M."/>
            <person name="Enju A."/>
            <person name="Akiyama K."/>
            <person name="Oono Y."/>
            <person name="Muramatsu M."/>
            <person name="Hayashizaki Y."/>
            <person name="Kawai J."/>
            <person name="Carninci P."/>
            <person name="Itoh M."/>
            <person name="Ishii Y."/>
            <person name="Arakawa T."/>
            <person name="Shibata K."/>
            <person name="Shinagawa A."/>
            <person name="Shinozaki K."/>
        </authorList>
    </citation>
    <scope>NUCLEOTIDE SEQUENCE [LARGE SCALE MRNA]</scope>
    <source>
        <strain>cv. Columbia</strain>
    </source>
</reference>
<reference key="4">
    <citation type="journal article" date="2003" name="Science">
        <title>Empirical analysis of transcriptional activity in the Arabidopsis genome.</title>
        <authorList>
            <person name="Yamada K."/>
            <person name="Lim J."/>
            <person name="Dale J.M."/>
            <person name="Chen H."/>
            <person name="Shinn P."/>
            <person name="Palm C.J."/>
            <person name="Southwick A.M."/>
            <person name="Wu H.C."/>
            <person name="Kim C.J."/>
            <person name="Nguyen M."/>
            <person name="Pham P.K."/>
            <person name="Cheuk R.F."/>
            <person name="Karlin-Newmann G."/>
            <person name="Liu S.X."/>
            <person name="Lam B."/>
            <person name="Sakano H."/>
            <person name="Wu T."/>
            <person name="Yu G."/>
            <person name="Miranda M."/>
            <person name="Quach H.L."/>
            <person name="Tripp M."/>
            <person name="Chang C.H."/>
            <person name="Lee J.M."/>
            <person name="Toriumi M.J."/>
            <person name="Chan M.M."/>
            <person name="Tang C.C."/>
            <person name="Onodera C.S."/>
            <person name="Deng J.M."/>
            <person name="Akiyama K."/>
            <person name="Ansari Y."/>
            <person name="Arakawa T."/>
            <person name="Banh J."/>
            <person name="Banno F."/>
            <person name="Bowser L."/>
            <person name="Brooks S.Y."/>
            <person name="Carninci P."/>
            <person name="Chao Q."/>
            <person name="Choy N."/>
            <person name="Enju A."/>
            <person name="Goldsmith A.D."/>
            <person name="Gurjal M."/>
            <person name="Hansen N.F."/>
            <person name="Hayashizaki Y."/>
            <person name="Johnson-Hopson C."/>
            <person name="Hsuan V.W."/>
            <person name="Iida K."/>
            <person name="Karnes M."/>
            <person name="Khan S."/>
            <person name="Koesema E."/>
            <person name="Ishida J."/>
            <person name="Jiang P.X."/>
            <person name="Jones T."/>
            <person name="Kawai J."/>
            <person name="Kamiya A."/>
            <person name="Meyers C."/>
            <person name="Nakajima M."/>
            <person name="Narusaka M."/>
            <person name="Seki M."/>
            <person name="Sakurai T."/>
            <person name="Satou M."/>
            <person name="Tamse R."/>
            <person name="Vaysberg M."/>
            <person name="Wallender E.K."/>
            <person name="Wong C."/>
            <person name="Yamamura Y."/>
            <person name="Yuan S."/>
            <person name="Shinozaki K."/>
            <person name="Davis R.W."/>
            <person name="Theologis A."/>
            <person name="Ecker J.R."/>
        </authorList>
    </citation>
    <scope>NUCLEOTIDE SEQUENCE [LARGE SCALE MRNA]</scope>
    <source>
        <strain>cv. Columbia</strain>
    </source>
</reference>
<reference key="5">
    <citation type="submission" date="2002-03" db="EMBL/GenBank/DDBJ databases">
        <title>Full-length cDNA from Arabidopsis thaliana.</title>
        <authorList>
            <person name="Brover V.V."/>
            <person name="Troukhan M.E."/>
            <person name="Alexandrov N.A."/>
            <person name="Lu Y.-P."/>
            <person name="Flavell R.B."/>
            <person name="Feldmann K.A."/>
        </authorList>
    </citation>
    <scope>NUCLEOTIDE SEQUENCE [LARGE SCALE MRNA]</scope>
</reference>
<gene>
    <name type="ordered locus">At1g52590</name>
    <name type="ORF">F6D8.19</name>
</gene>
<evidence type="ECO:0000255" key="1"/>
<evidence type="ECO:0000305" key="2"/>